<keyword id="KW-0963">Cytoplasm</keyword>
<keyword id="KW-1185">Reference proteome</keyword>
<proteinExistence type="inferred from homology"/>
<name>RRAB_SHEAM</name>
<comment type="function">
    <text evidence="1">Globally modulates RNA abundance by binding to RNase E (Rne) and regulating its endonucleolytic activity. Can modulate Rne action in a substrate-dependent manner by altering the composition of the degradosome.</text>
</comment>
<comment type="subunit">
    <text evidence="1">Interacts with the C-terminal region of Rne.</text>
</comment>
<comment type="subcellular location">
    <subcellularLocation>
        <location evidence="1">Cytoplasm</location>
    </subcellularLocation>
</comment>
<comment type="similarity">
    <text evidence="1">Belongs to the RraB family.</text>
</comment>
<sequence length="141" mass="16076">MSIERLLKAQQEETRDIVQSLLDDGSDPDAEYMIEHHFSSTNFDRLEKAAVDAFKLGFEVTDAEELELDDGSVILCFDAIANHALDVDLIDKACEQLINLAAKQKVDYDGWGTYFMGDDEDFDDEDDDEDYDKDGFPIERH</sequence>
<reference key="1">
    <citation type="submission" date="2006-12" db="EMBL/GenBank/DDBJ databases">
        <title>Complete sequence of Shewanella amazonensis SB2B.</title>
        <authorList>
            <consortium name="US DOE Joint Genome Institute"/>
            <person name="Copeland A."/>
            <person name="Lucas S."/>
            <person name="Lapidus A."/>
            <person name="Barry K."/>
            <person name="Detter J.C."/>
            <person name="Glavina del Rio T."/>
            <person name="Hammon N."/>
            <person name="Israni S."/>
            <person name="Dalin E."/>
            <person name="Tice H."/>
            <person name="Pitluck S."/>
            <person name="Munk A.C."/>
            <person name="Brettin T."/>
            <person name="Bruce D."/>
            <person name="Han C."/>
            <person name="Tapia R."/>
            <person name="Gilna P."/>
            <person name="Schmutz J."/>
            <person name="Larimer F."/>
            <person name="Land M."/>
            <person name="Hauser L."/>
            <person name="Kyrpides N."/>
            <person name="Mikhailova N."/>
            <person name="Fredrickson J."/>
            <person name="Richardson P."/>
        </authorList>
    </citation>
    <scope>NUCLEOTIDE SEQUENCE [LARGE SCALE GENOMIC DNA]</scope>
    <source>
        <strain>ATCC BAA-1098 / SB2B</strain>
    </source>
</reference>
<protein>
    <recommendedName>
        <fullName evidence="1">Regulator of ribonuclease activity B</fullName>
    </recommendedName>
</protein>
<evidence type="ECO:0000255" key="1">
    <source>
        <dbReference type="HAMAP-Rule" id="MF_01888"/>
    </source>
</evidence>
<evidence type="ECO:0000256" key="2">
    <source>
        <dbReference type="SAM" id="MobiDB-lite"/>
    </source>
</evidence>
<feature type="chain" id="PRO_0000404315" description="Regulator of ribonuclease activity B">
    <location>
        <begin position="1"/>
        <end position="141"/>
    </location>
</feature>
<feature type="region of interest" description="Disordered" evidence="2">
    <location>
        <begin position="119"/>
        <end position="141"/>
    </location>
</feature>
<feature type="compositionally biased region" description="Acidic residues" evidence="2">
    <location>
        <begin position="119"/>
        <end position="132"/>
    </location>
</feature>
<organism>
    <name type="scientific">Shewanella amazonensis (strain ATCC BAA-1098 / SB2B)</name>
    <dbReference type="NCBI Taxonomy" id="326297"/>
    <lineage>
        <taxon>Bacteria</taxon>
        <taxon>Pseudomonadati</taxon>
        <taxon>Pseudomonadota</taxon>
        <taxon>Gammaproteobacteria</taxon>
        <taxon>Alteromonadales</taxon>
        <taxon>Shewanellaceae</taxon>
        <taxon>Shewanella</taxon>
    </lineage>
</organism>
<dbReference type="EMBL" id="CP000507">
    <property type="protein sequence ID" value="ABM01341.1"/>
    <property type="molecule type" value="Genomic_DNA"/>
</dbReference>
<dbReference type="RefSeq" id="WP_011761245.1">
    <property type="nucleotide sequence ID" value="NC_008700.1"/>
</dbReference>
<dbReference type="SMR" id="A1SAD4"/>
<dbReference type="STRING" id="326297.Sama_3138"/>
<dbReference type="KEGG" id="saz:Sama_3138"/>
<dbReference type="eggNOG" id="COG3076">
    <property type="taxonomic scope" value="Bacteria"/>
</dbReference>
<dbReference type="HOGENOM" id="CLU_128640_0_0_6"/>
<dbReference type="OrthoDB" id="7065464at2"/>
<dbReference type="Proteomes" id="UP000009175">
    <property type="component" value="Chromosome"/>
</dbReference>
<dbReference type="GO" id="GO:0005737">
    <property type="term" value="C:cytoplasm"/>
    <property type="evidence" value="ECO:0007669"/>
    <property type="project" value="UniProtKB-SubCell"/>
</dbReference>
<dbReference type="GO" id="GO:0060698">
    <property type="term" value="F:endoribonuclease inhibitor activity"/>
    <property type="evidence" value="ECO:0007669"/>
    <property type="project" value="UniProtKB-UniRule"/>
</dbReference>
<dbReference type="GO" id="GO:0019899">
    <property type="term" value="F:enzyme binding"/>
    <property type="evidence" value="ECO:0007669"/>
    <property type="project" value="UniProtKB-UniRule"/>
</dbReference>
<dbReference type="Gene3D" id="3.30.70.970">
    <property type="entry name" value="RraB-like"/>
    <property type="match status" value="1"/>
</dbReference>
<dbReference type="HAMAP" id="MF_01888">
    <property type="entry name" value="RraB"/>
    <property type="match status" value="1"/>
</dbReference>
<dbReference type="InterPro" id="IPR016716">
    <property type="entry name" value="RraB"/>
</dbReference>
<dbReference type="InterPro" id="IPR036701">
    <property type="entry name" value="RraB-like_sf"/>
</dbReference>
<dbReference type="InterPro" id="IPR009671">
    <property type="entry name" value="RraB_dom"/>
</dbReference>
<dbReference type="NCBIfam" id="NF008393">
    <property type="entry name" value="PRK11191.1"/>
    <property type="match status" value="1"/>
</dbReference>
<dbReference type="Pfam" id="PF06877">
    <property type="entry name" value="RraB"/>
    <property type="match status" value="1"/>
</dbReference>
<dbReference type="PIRSF" id="PIRSF018193">
    <property type="entry name" value="UCP018193"/>
    <property type="match status" value="1"/>
</dbReference>
<dbReference type="SUPFAM" id="SSF89946">
    <property type="entry name" value="Hypothetical protein VC0424"/>
    <property type="match status" value="1"/>
</dbReference>
<accession>A1SAD4</accession>
<gene>
    <name evidence="1" type="primary">rraB</name>
    <name type="ordered locus">Sama_3138</name>
</gene>